<proteinExistence type="evidence at protein level"/>
<name>HCY2E_RAPVE</name>
<dbReference type="PDB" id="1LNL">
    <property type="method" value="X-ray"/>
    <property type="resolution" value="3.30 A"/>
    <property type="chains" value="A/B/C=7-413"/>
</dbReference>
<dbReference type="PDBsum" id="1LNL"/>
<dbReference type="SMR" id="P83040"/>
<dbReference type="iPTMnet" id="P83040"/>
<dbReference type="EvolutionaryTrace" id="P83040"/>
<dbReference type="GO" id="GO:0005576">
    <property type="term" value="C:extracellular region"/>
    <property type="evidence" value="ECO:0007669"/>
    <property type="project" value="UniProtKB-SubCell"/>
</dbReference>
<dbReference type="GO" id="GO:0046872">
    <property type="term" value="F:metal ion binding"/>
    <property type="evidence" value="ECO:0007669"/>
    <property type="project" value="UniProtKB-KW"/>
</dbReference>
<dbReference type="GO" id="GO:0016491">
    <property type="term" value="F:oxidoreductase activity"/>
    <property type="evidence" value="ECO:0007669"/>
    <property type="project" value="InterPro"/>
</dbReference>
<dbReference type="GO" id="GO:0005344">
    <property type="term" value="F:oxygen carrier activity"/>
    <property type="evidence" value="ECO:0007669"/>
    <property type="project" value="UniProtKB-KW"/>
</dbReference>
<dbReference type="Gene3D" id="1.10.1280.10">
    <property type="entry name" value="Di-copper center containing domain from catechol oxidase"/>
    <property type="match status" value="1"/>
</dbReference>
<dbReference type="Gene3D" id="2.60.310.10">
    <property type="entry name" value="Haemocyanin C-terminal domain"/>
    <property type="match status" value="1"/>
</dbReference>
<dbReference type="InterPro" id="IPR008922">
    <property type="entry name" value="Di-copper_centre_dom_sf"/>
</dbReference>
<dbReference type="InterPro" id="IPR028999">
    <property type="entry name" value="Haemocyanin_beta-sandwich"/>
</dbReference>
<dbReference type="InterPro" id="IPR036848">
    <property type="entry name" value="Haemocyanin_C_sf"/>
</dbReference>
<dbReference type="InterPro" id="IPR050316">
    <property type="entry name" value="Tyrosinase/Hemocyanin"/>
</dbReference>
<dbReference type="InterPro" id="IPR002227">
    <property type="entry name" value="Tyrosinase_Cu-bd"/>
</dbReference>
<dbReference type="PANTHER" id="PTHR11474">
    <property type="entry name" value="TYROSINASE FAMILY MEMBER"/>
    <property type="match status" value="1"/>
</dbReference>
<dbReference type="Pfam" id="PF14830">
    <property type="entry name" value="Haemocyan_bet_s"/>
    <property type="match status" value="1"/>
</dbReference>
<dbReference type="Pfam" id="PF00264">
    <property type="entry name" value="Tyrosinase"/>
    <property type="match status" value="1"/>
</dbReference>
<dbReference type="PRINTS" id="PR00092">
    <property type="entry name" value="TYROSINASE"/>
</dbReference>
<dbReference type="SUPFAM" id="SSF81277">
    <property type="entry name" value="C-terminal domain of mollusc hemocyanin"/>
    <property type="match status" value="1"/>
</dbReference>
<dbReference type="SUPFAM" id="SSF48056">
    <property type="entry name" value="Di-copper centre-containing domain"/>
    <property type="match status" value="1"/>
</dbReference>
<dbReference type="PROSITE" id="PS00497">
    <property type="entry name" value="TYROSINASE_1"/>
    <property type="match status" value="1"/>
</dbReference>
<dbReference type="PROSITE" id="PS00498">
    <property type="entry name" value="TYROSINASE_2"/>
    <property type="match status" value="1"/>
</dbReference>
<accession>P83040</accession>
<organism>
    <name type="scientific">Rapana venosa</name>
    <name type="common">Veined rapa whelk</name>
    <name type="synonym">Rapana thomasiana</name>
    <dbReference type="NCBI Taxonomy" id="55521"/>
    <lineage>
        <taxon>Eukaryota</taxon>
        <taxon>Metazoa</taxon>
        <taxon>Spiralia</taxon>
        <taxon>Lophotrochozoa</taxon>
        <taxon>Mollusca</taxon>
        <taxon>Gastropoda</taxon>
        <taxon>Caenogastropoda</taxon>
        <taxon>Neogastropoda</taxon>
        <taxon>Muricoidea</taxon>
        <taxon>Muricidae</taxon>
        <taxon>Rapana</taxon>
    </lineage>
</organism>
<sequence>DDQGHTHRNLVRKSVRNLSPAERRSLVHALKSLQEDSSADGFQSLASFHAQPPLCPYPEANKRFACCVHGMATFPEWHRLYTVQFEDALRRHGSVVGIPYWDTVVPQEDLPAFFNDEIWDDPLFHANFTNPFNGADIDFNHQKIARDINVDKLFKEGPKGYDTWSFKQYIYALEQEDYCDFEVQFEIAHNAIHAWVGGTEEYSMGHLHYASYDPVFILHHSNTDRLFALWQELQKFRGHDPNEVNCALEMMREPLKPFSFGAPYNLNPTTKEHSKPEDTFDYKGHFHYEYDHLELQGMNVQRLHDYINQQKERDRVFAGFLLEGIGTSAHLDFSICKIDGECTHAGYFDVLGGSLETPWQFDRLYKYEITDVLESKGLDVHDVFDIKITQTSWDNEDISTDRFPPPSVIYVPK</sequence>
<reference key="1">
    <citation type="journal article" date="2002" name="Arch. Biochem. Biophys.">
        <title>Amino acid sequence and glycosylation of functional unit RtH2-e from Rapana thomasiana (gastropod) hemocyanin.</title>
        <authorList>
            <person name="Stoeva S."/>
            <person name="Idakieva K."/>
            <person name="Betzel C."/>
            <person name="Genov N."/>
            <person name="Voelter W."/>
        </authorList>
    </citation>
    <scope>PROTEIN SEQUENCE</scope>
    <scope>GLYCOSYLATION AT ASN-17 AND ASN-127</scope>
    <source>
        <tissue>Hemolymph</tissue>
    </source>
</reference>
<reference key="2">
    <citation type="journal article" date="2001" name="Acta Crystallogr. D">
        <title>Preliminary X-ray diffraction studies of the external functional unit RtH2-e from the Rapana thomasiana.</title>
        <authorList>
            <person name="Perbandt M."/>
            <person name="Chandra V."/>
            <person name="Rajashankar K.R."/>
            <person name="Idakieva K."/>
            <person name="Parvanova K."/>
            <person name="Rypniewski W."/>
            <person name="Stoeva S."/>
            <person name="Voelter W."/>
            <person name="Genov N."/>
            <person name="Betzel C."/>
        </authorList>
    </citation>
    <scope>CRYSTALLIZATION</scope>
</reference>
<reference key="3">
    <citation type="journal article" date="2000" name="Biochim. Biophys. Acta">
        <title>Arrangement of functional units within the Rapana thomasiana hemocyanin subunit RtH2.</title>
        <authorList>
            <person name="Idakieva K."/>
            <person name="Stoeva S."/>
            <person name="Pervanova K."/>
            <person name="Genov N."/>
            <person name="Voelter W."/>
        </authorList>
    </citation>
    <scope>SUBUNIT</scope>
</reference>
<reference key="4">
    <citation type="journal article" date="2003" name="Biochemistry">
        <title>The structure of a functional unit from the wall of a gastropod hemocyanin offers a possible mechanism for cooperativity.</title>
        <authorList>
            <person name="Perbandt M."/>
            <person name="Guthoehrlein E.W."/>
            <person name="Rypniewski W."/>
            <person name="Idakieva K."/>
            <person name="Stoeva S."/>
            <person name="Voelter W."/>
            <person name="Genov N."/>
            <person name="Betzel C."/>
        </authorList>
    </citation>
    <scope>X-RAY CRYSTALLOGRAPHY (3.3 ANGSTROMS) OF 6-413</scope>
    <scope>DISULFIDE BOND</scope>
    <scope>THIOETHER BOND</scope>
</reference>
<feature type="chain" id="PRO_0000204307" description="Hemocyanin type 2 unit e">
    <location>
        <begin position="1"/>
        <end position="413"/>
    </location>
</feature>
<feature type="binding site">
    <location>
        <position position="49"/>
    </location>
    <ligand>
        <name>Cu cation</name>
        <dbReference type="ChEBI" id="CHEBI:23378"/>
        <label>A</label>
    </ligand>
</feature>
<feature type="binding site">
    <location>
        <position position="69"/>
    </location>
    <ligand>
        <name>Cu cation</name>
        <dbReference type="ChEBI" id="CHEBI:23378"/>
        <label>A</label>
    </ligand>
</feature>
<feature type="binding site">
    <location>
        <position position="78"/>
    </location>
    <ligand>
        <name>Cu cation</name>
        <dbReference type="ChEBI" id="CHEBI:23378"/>
        <label>A</label>
    </ligand>
</feature>
<feature type="binding site">
    <location>
        <position position="189"/>
    </location>
    <ligand>
        <name>Cu cation</name>
        <dbReference type="ChEBI" id="CHEBI:23378"/>
        <label>B</label>
    </ligand>
</feature>
<feature type="binding site">
    <location>
        <position position="193"/>
    </location>
    <ligand>
        <name>Cu cation</name>
        <dbReference type="ChEBI" id="CHEBI:23378"/>
        <label>B</label>
    </ligand>
</feature>
<feature type="binding site">
    <location>
        <position position="220"/>
    </location>
    <ligand>
        <name>Cu cation</name>
        <dbReference type="ChEBI" id="CHEBI:23378"/>
        <label>B</label>
    </ligand>
</feature>
<feature type="glycosylation site" description="N-linked (GlcNAc...) (high mannose) asparagine" evidence="3">
    <location>
        <position position="17"/>
    </location>
</feature>
<feature type="glycosylation site" description="N-linked (GlcNAc...) (high mannose) asparagine" evidence="3">
    <location>
        <position position="127"/>
    </location>
</feature>
<feature type="disulfide bond" evidence="4 6">
    <location>
        <begin position="55"/>
        <end position="66"/>
    </location>
</feature>
<feature type="disulfide bond" evidence="4 6">
    <location>
        <begin position="179"/>
        <end position="246"/>
    </location>
</feature>
<feature type="disulfide bond" evidence="4 6">
    <location>
        <begin position="336"/>
        <end position="342"/>
    </location>
</feature>
<feature type="cross-link" description="2'-(S-cysteinyl)-histidine (Cys-His)" evidence="4">
    <location>
        <begin position="67"/>
        <end position="69"/>
    </location>
</feature>
<feature type="strand" evidence="7">
    <location>
        <begin position="10"/>
        <end position="12"/>
    </location>
</feature>
<feature type="helix" evidence="7">
    <location>
        <begin position="15"/>
        <end position="17"/>
    </location>
</feature>
<feature type="helix" evidence="7">
    <location>
        <begin position="20"/>
        <end position="33"/>
    </location>
</feature>
<feature type="helix" evidence="7">
    <location>
        <begin position="44"/>
        <end position="46"/>
    </location>
</feature>
<feature type="turn" evidence="7">
    <location>
        <begin position="47"/>
        <end position="49"/>
    </location>
</feature>
<feature type="strand" evidence="7">
    <location>
        <begin position="50"/>
        <end position="52"/>
    </location>
</feature>
<feature type="helix" evidence="7">
    <location>
        <begin position="74"/>
        <end position="91"/>
    </location>
</feature>
<feature type="helix" evidence="7">
    <location>
        <begin position="112"/>
        <end position="115"/>
    </location>
</feature>
<feature type="turn" evidence="7">
    <location>
        <begin position="122"/>
        <end position="125"/>
    </location>
</feature>
<feature type="helix" evidence="7">
    <location>
        <begin position="131"/>
        <end position="133"/>
    </location>
</feature>
<feature type="helix" evidence="7">
    <location>
        <begin position="164"/>
        <end position="173"/>
    </location>
</feature>
<feature type="helix" evidence="7">
    <location>
        <begin position="179"/>
        <end position="197"/>
    </location>
</feature>
<feature type="strand" evidence="7">
    <location>
        <begin position="201"/>
        <end position="203"/>
    </location>
</feature>
<feature type="helix" evidence="7">
    <location>
        <begin position="209"/>
        <end position="211"/>
    </location>
</feature>
<feature type="helix" evidence="7">
    <location>
        <begin position="215"/>
        <end position="219"/>
    </location>
</feature>
<feature type="helix" evidence="7">
    <location>
        <begin position="222"/>
        <end position="236"/>
    </location>
</feature>
<feature type="turn" evidence="7">
    <location>
        <begin position="248"/>
        <end position="252"/>
    </location>
</feature>
<feature type="helix" evidence="7">
    <location>
        <begin position="258"/>
        <end position="260"/>
    </location>
</feature>
<feature type="turn" evidence="7">
    <location>
        <begin position="262"/>
        <end position="264"/>
    </location>
</feature>
<feature type="helix" evidence="7">
    <location>
        <begin position="268"/>
        <end position="271"/>
    </location>
</feature>
<feature type="helix" evidence="7">
    <location>
        <begin position="276"/>
        <end position="279"/>
    </location>
</feature>
<feature type="helix" evidence="7">
    <location>
        <begin position="282"/>
        <end position="285"/>
    </location>
</feature>
<feature type="strand" evidence="7">
    <location>
        <begin position="288"/>
        <end position="291"/>
    </location>
</feature>
<feature type="strand" evidence="7">
    <location>
        <begin position="295"/>
        <end position="297"/>
    </location>
</feature>
<feature type="helix" evidence="7">
    <location>
        <begin position="300"/>
        <end position="310"/>
    </location>
</feature>
<feature type="strand" evidence="7">
    <location>
        <begin position="315"/>
        <end position="320"/>
    </location>
</feature>
<feature type="strand" evidence="7">
    <location>
        <begin position="329"/>
        <end position="336"/>
    </location>
</feature>
<feature type="strand" evidence="7">
    <location>
        <begin position="338"/>
        <end position="340"/>
    </location>
</feature>
<feature type="strand" evidence="7">
    <location>
        <begin position="342"/>
        <end position="350"/>
    </location>
</feature>
<feature type="strand" evidence="7">
    <location>
        <begin position="365"/>
        <end position="368"/>
    </location>
</feature>
<feature type="helix" evidence="7">
    <location>
        <begin position="370"/>
        <end position="374"/>
    </location>
</feature>
<feature type="turn" evidence="7">
    <location>
        <begin position="375"/>
        <end position="377"/>
    </location>
</feature>
<feature type="strand" evidence="7">
    <location>
        <begin position="385"/>
        <end position="395"/>
    </location>
</feature>
<feature type="helix" evidence="7">
    <location>
        <begin position="400"/>
        <end position="402"/>
    </location>
</feature>
<evidence type="ECO:0000250" key="1">
    <source>
        <dbReference type="UniProtKB" id="P12659"/>
    </source>
</evidence>
<evidence type="ECO:0000269" key="2">
    <source>
    </source>
</evidence>
<evidence type="ECO:0000269" key="3">
    <source>
    </source>
</evidence>
<evidence type="ECO:0000269" key="4">
    <source>
    </source>
</evidence>
<evidence type="ECO:0000305" key="5"/>
<evidence type="ECO:0007744" key="6">
    <source>
        <dbReference type="PDB" id="1LNL"/>
    </source>
</evidence>
<evidence type="ECO:0007829" key="7">
    <source>
        <dbReference type="PDB" id="1LNL"/>
    </source>
</evidence>
<keyword id="KW-0002">3D-structure</keyword>
<keyword id="KW-0186">Copper</keyword>
<keyword id="KW-0903">Direct protein sequencing</keyword>
<keyword id="KW-1015">Disulfide bond</keyword>
<keyword id="KW-0325">Glycoprotein</keyword>
<keyword id="KW-0479">Metal-binding</keyword>
<keyword id="KW-0561">Oxygen transport</keyword>
<keyword id="KW-0964">Secreted</keyword>
<keyword id="KW-0883">Thioether bond</keyword>
<keyword id="KW-0813">Transport</keyword>
<comment type="function">
    <text evidence="1">Hemocyanins are copper-containing oxygen carriers occurring freely dissolved in the hemolymph of many mollusks and arthropods.</text>
</comment>
<comment type="cofactor">
    <cofactor>
        <name>Cu(2+)</name>
        <dbReference type="ChEBI" id="CHEBI:29036"/>
    </cofactor>
    <text>Binds 2 copper ions per heterodimer.</text>
</comment>
<comment type="subunit">
    <text evidence="2">Decamers of large identical subunits, each containing 8 globular oxygen-binding functional units.</text>
</comment>
<comment type="subcellular location">
    <subcellularLocation>
        <location>Secreted</location>
        <location>Extracellular space</location>
    </subcellularLocation>
</comment>
<comment type="tissue specificity">
    <text evidence="5">Hemolymph.</text>
</comment>
<comment type="similarity">
    <text evidence="5">Belongs to the tyrosinase family. Hemocyanin subfamily.</text>
</comment>
<protein>
    <recommendedName>
        <fullName>Hemocyanin type 2 unit e</fullName>
    </recommendedName>
    <alternativeName>
        <fullName>RtH2-e</fullName>
    </alternativeName>
</protein>